<comment type="function">
    <text evidence="1">F(1)F(0) ATP synthase produces ATP from ADP in the presence of a proton or sodium gradient. F-type ATPases consist of two structural domains, F(1) containing the extramembraneous catalytic core and F(0) containing the membrane proton channel, linked together by a central stalk and a peripheral stalk. During catalysis, ATP synthesis in the catalytic domain of F(1) is coupled via a rotary mechanism of the central stalk subunits to proton translocation.</text>
</comment>
<comment type="function">
    <text evidence="1">Component of the F(0) channel, it forms part of the peripheral stalk, linking F(1) to F(0).</text>
</comment>
<comment type="subunit">
    <text evidence="1">F-type ATPases have 2 components, F(1) - the catalytic core - and F(0) - the membrane proton channel. F(1) has five subunits: alpha(3), beta(3), gamma(1), delta(1), epsilon(1). F(0) has four main subunits: a(1), b(1), b'(1) and c(10-14). The alpha and beta chains form an alternating ring which encloses part of the gamma chain. F(1) is attached to F(0) by a central stalk formed by the gamma and epsilon chains, while a peripheral stalk is formed by the delta, b and b' chains.</text>
</comment>
<comment type="subcellular location">
    <subcellularLocation>
        <location evidence="1">Plastid</location>
        <location evidence="1">Chloroplast thylakoid membrane</location>
        <topology evidence="1">Single-pass membrane protein</topology>
    </subcellularLocation>
</comment>
<comment type="miscellaneous">
    <text>In plastids the F-type ATPase is also known as CF(1)CF(0).</text>
</comment>
<comment type="similarity">
    <text evidence="1">Belongs to the ATPase B chain family.</text>
</comment>
<name>ATPF_GRATL</name>
<feature type="chain" id="PRO_0000368990" description="ATP synthase subunit b, chloroplastic">
    <location>
        <begin position="1"/>
        <end position="182"/>
    </location>
</feature>
<feature type="transmembrane region" description="Helical" evidence="1">
    <location>
        <begin position="36"/>
        <end position="56"/>
    </location>
</feature>
<geneLocation type="chloroplast"/>
<sequence>MDSCIQVFSVIANFDTDYNLSISFNTDFLEANVINILLLLLGLMYVLKEFLGSILVDRQEKVLLAIQESEERLKQANSRLSESEKQLAQTQMVIAQIIKEAETTAQKVRQSILDQGKADVDKLISASKASIATAEVQIKQQIQLQVTSLAIKRVTMQLQDQITPNIQTRIIDNNIAQLGGYL</sequence>
<reference key="1">
    <citation type="journal article" date="2004" name="J. Mol. Evol.">
        <title>Comparative analysis of the complete plastid genome sequence of the red alga Gracilaria tenuistipitata var. liui provides insights into the evolution of rhodoplasts and their relationship to other plastids.</title>
        <authorList>
            <person name="Hagopian J.C."/>
            <person name="Reis M."/>
            <person name="Kitajima J.P."/>
            <person name="Bhattacharya D."/>
            <person name="de Oliveira M.C."/>
        </authorList>
    </citation>
    <scope>NUCLEOTIDE SEQUENCE [LARGE SCALE GENOMIC DNA]</scope>
</reference>
<protein>
    <recommendedName>
        <fullName evidence="1">ATP synthase subunit b, chloroplastic</fullName>
    </recommendedName>
    <alternativeName>
        <fullName evidence="1">ATP synthase F(0) sector subunit b</fullName>
    </alternativeName>
    <alternativeName>
        <fullName evidence="1">ATPase subunit I</fullName>
    </alternativeName>
</protein>
<gene>
    <name evidence="1" type="primary">atpF</name>
    <name type="ordered locus">Grc000144</name>
</gene>
<keyword id="KW-0066">ATP synthesis</keyword>
<keyword id="KW-0138">CF(0)</keyword>
<keyword id="KW-0150">Chloroplast</keyword>
<keyword id="KW-0375">Hydrogen ion transport</keyword>
<keyword id="KW-0406">Ion transport</keyword>
<keyword id="KW-0472">Membrane</keyword>
<keyword id="KW-0934">Plastid</keyword>
<keyword id="KW-0793">Thylakoid</keyword>
<keyword id="KW-0812">Transmembrane</keyword>
<keyword id="KW-1133">Transmembrane helix</keyword>
<keyword id="KW-0813">Transport</keyword>
<evidence type="ECO:0000255" key="1">
    <source>
        <dbReference type="HAMAP-Rule" id="MF_01398"/>
    </source>
</evidence>
<accession>Q6B8R0</accession>
<dbReference type="EMBL" id="AY673996">
    <property type="protein sequence ID" value="AAT79725.1"/>
    <property type="molecule type" value="Genomic_DNA"/>
</dbReference>
<dbReference type="RefSeq" id="YP_063650.1">
    <property type="nucleotide sequence ID" value="NC_006137.1"/>
</dbReference>
<dbReference type="SMR" id="Q6B8R0"/>
<dbReference type="GeneID" id="2944106"/>
<dbReference type="GO" id="GO:0009535">
    <property type="term" value="C:chloroplast thylakoid membrane"/>
    <property type="evidence" value="ECO:0007669"/>
    <property type="project" value="UniProtKB-SubCell"/>
</dbReference>
<dbReference type="GO" id="GO:0045259">
    <property type="term" value="C:proton-transporting ATP synthase complex"/>
    <property type="evidence" value="ECO:0007669"/>
    <property type="project" value="UniProtKB-KW"/>
</dbReference>
<dbReference type="GO" id="GO:0046933">
    <property type="term" value="F:proton-transporting ATP synthase activity, rotational mechanism"/>
    <property type="evidence" value="ECO:0007669"/>
    <property type="project" value="UniProtKB-UniRule"/>
</dbReference>
<dbReference type="CDD" id="cd06503">
    <property type="entry name" value="ATP-synt_Fo_b"/>
    <property type="match status" value="1"/>
</dbReference>
<dbReference type="HAMAP" id="MF_01398">
    <property type="entry name" value="ATP_synth_b_bprime"/>
    <property type="match status" value="1"/>
</dbReference>
<dbReference type="InterPro" id="IPR002146">
    <property type="entry name" value="ATP_synth_b/b'su_bac/chlpt"/>
</dbReference>
<dbReference type="PANTHER" id="PTHR34264">
    <property type="entry name" value="ATP SYNTHASE SUBUNIT B, CHLOROPLASTIC"/>
    <property type="match status" value="1"/>
</dbReference>
<dbReference type="PANTHER" id="PTHR34264:SF3">
    <property type="entry name" value="ATP SYNTHASE SUBUNIT B, CHLOROPLASTIC"/>
    <property type="match status" value="1"/>
</dbReference>
<dbReference type="Pfam" id="PF00430">
    <property type="entry name" value="ATP-synt_B"/>
    <property type="match status" value="1"/>
</dbReference>
<organism>
    <name type="scientific">Gracilaria tenuistipitata var. liui</name>
    <name type="common">Red alga</name>
    <dbReference type="NCBI Taxonomy" id="285951"/>
    <lineage>
        <taxon>Eukaryota</taxon>
        <taxon>Rhodophyta</taxon>
        <taxon>Florideophyceae</taxon>
        <taxon>Rhodymeniophycidae</taxon>
        <taxon>Gracilariales</taxon>
        <taxon>Gracilariaceae</taxon>
        <taxon>Gracilaria</taxon>
        <taxon>Gracilaria tenuistipitata</taxon>
    </lineage>
</organism>
<proteinExistence type="inferred from homology"/>